<dbReference type="EMBL" id="AC008263">
    <property type="protein sequence ID" value="AAD55301.1"/>
    <property type="molecule type" value="Genomic_DNA"/>
</dbReference>
<dbReference type="EMBL" id="CP002684">
    <property type="protein sequence ID" value="AEE35629.1"/>
    <property type="molecule type" value="Genomic_DNA"/>
</dbReference>
<dbReference type="EMBL" id="CP002684">
    <property type="protein sequence ID" value="ANM61095.1"/>
    <property type="molecule type" value="Genomic_DNA"/>
</dbReference>
<dbReference type="EMBL" id="CP002684">
    <property type="protein sequence ID" value="ANM61096.1"/>
    <property type="molecule type" value="Genomic_DNA"/>
</dbReference>
<dbReference type="EMBL" id="CP002684">
    <property type="protein sequence ID" value="ANM61097.1"/>
    <property type="molecule type" value="Genomic_DNA"/>
</dbReference>
<dbReference type="PIR" id="G96776">
    <property type="entry name" value="G96776"/>
</dbReference>
<dbReference type="RefSeq" id="NP_001319382.1">
    <property type="nucleotide sequence ID" value="NM_001334663.1"/>
</dbReference>
<dbReference type="RefSeq" id="NP_001323334.1">
    <property type="nucleotide sequence ID" value="NM_001334665.1"/>
</dbReference>
<dbReference type="RefSeq" id="NP_001323335.1">
    <property type="nucleotide sequence ID" value="NM_001334664.1"/>
</dbReference>
<dbReference type="RefSeq" id="NP_177613.1">
    <property type="nucleotide sequence ID" value="NM_106133.2"/>
</dbReference>
<dbReference type="SMR" id="Q9SSF9"/>
<dbReference type="FunCoup" id="Q9SSF9">
    <property type="interactions" value="478"/>
</dbReference>
<dbReference type="STRING" id="3702.Q9SSF9"/>
<dbReference type="iPTMnet" id="Q9SSF9"/>
<dbReference type="PaxDb" id="3702-AT1G74750.1"/>
<dbReference type="EnsemblPlants" id="AT1G74750.1">
    <property type="protein sequence ID" value="AT1G74750.1"/>
    <property type="gene ID" value="AT1G74750"/>
</dbReference>
<dbReference type="EnsemblPlants" id="AT1G74750.2">
    <property type="protein sequence ID" value="AT1G74750.2"/>
    <property type="gene ID" value="AT1G74750"/>
</dbReference>
<dbReference type="EnsemblPlants" id="AT1G74750.3">
    <property type="protein sequence ID" value="AT1G74750.3"/>
    <property type="gene ID" value="AT1G74750"/>
</dbReference>
<dbReference type="EnsemblPlants" id="AT1G74750.4">
    <property type="protein sequence ID" value="AT1G74750.4"/>
    <property type="gene ID" value="AT1G74750"/>
</dbReference>
<dbReference type="GeneID" id="843814"/>
<dbReference type="Gramene" id="AT1G74750.1">
    <property type="protein sequence ID" value="AT1G74750.1"/>
    <property type="gene ID" value="AT1G74750"/>
</dbReference>
<dbReference type="Gramene" id="AT1G74750.2">
    <property type="protein sequence ID" value="AT1G74750.2"/>
    <property type="gene ID" value="AT1G74750"/>
</dbReference>
<dbReference type="Gramene" id="AT1G74750.3">
    <property type="protein sequence ID" value="AT1G74750.3"/>
    <property type="gene ID" value="AT1G74750"/>
</dbReference>
<dbReference type="Gramene" id="AT1G74750.4">
    <property type="protein sequence ID" value="AT1G74750.4"/>
    <property type="gene ID" value="AT1G74750"/>
</dbReference>
<dbReference type="KEGG" id="ath:AT1G74750"/>
<dbReference type="Araport" id="AT1G74750"/>
<dbReference type="TAIR" id="AT1G74750"/>
<dbReference type="eggNOG" id="KOG4197">
    <property type="taxonomic scope" value="Eukaryota"/>
</dbReference>
<dbReference type="HOGENOM" id="CLU_015575_1_0_1"/>
<dbReference type="InParanoid" id="Q9SSF9"/>
<dbReference type="OMA" id="QPYVERM"/>
<dbReference type="PhylomeDB" id="Q9SSF9"/>
<dbReference type="PRO" id="PR:Q9SSF9"/>
<dbReference type="Proteomes" id="UP000006548">
    <property type="component" value="Chromosome 1"/>
</dbReference>
<dbReference type="ExpressionAtlas" id="Q9SSF9">
    <property type="expression patterns" value="baseline and differential"/>
</dbReference>
<dbReference type="Gene3D" id="3.30.1370.110">
    <property type="match status" value="1"/>
</dbReference>
<dbReference type="Gene3D" id="1.25.40.10">
    <property type="entry name" value="Tetratricopeptide repeat domain"/>
    <property type="match status" value="3"/>
</dbReference>
<dbReference type="InterPro" id="IPR002885">
    <property type="entry name" value="Pentatricopeptide_rpt"/>
</dbReference>
<dbReference type="InterPro" id="IPR002625">
    <property type="entry name" value="Smr_dom"/>
</dbReference>
<dbReference type="InterPro" id="IPR036063">
    <property type="entry name" value="Smr_dom_sf"/>
</dbReference>
<dbReference type="InterPro" id="IPR011990">
    <property type="entry name" value="TPR-like_helical_dom_sf"/>
</dbReference>
<dbReference type="NCBIfam" id="TIGR00756">
    <property type="entry name" value="PPR"/>
    <property type="match status" value="8"/>
</dbReference>
<dbReference type="PANTHER" id="PTHR47447">
    <property type="entry name" value="OS03G0856100 PROTEIN"/>
    <property type="match status" value="1"/>
</dbReference>
<dbReference type="PANTHER" id="PTHR47447:SF17">
    <property type="entry name" value="OS12G0638900 PROTEIN"/>
    <property type="match status" value="1"/>
</dbReference>
<dbReference type="Pfam" id="PF01535">
    <property type="entry name" value="PPR"/>
    <property type="match status" value="2"/>
</dbReference>
<dbReference type="Pfam" id="PF12854">
    <property type="entry name" value="PPR_1"/>
    <property type="match status" value="1"/>
</dbReference>
<dbReference type="Pfam" id="PF13041">
    <property type="entry name" value="PPR_2"/>
    <property type="match status" value="3"/>
</dbReference>
<dbReference type="SMART" id="SM00463">
    <property type="entry name" value="SMR"/>
    <property type="match status" value="1"/>
</dbReference>
<dbReference type="SUPFAM" id="SSF160443">
    <property type="entry name" value="SMR domain-like"/>
    <property type="match status" value="1"/>
</dbReference>
<dbReference type="PROSITE" id="PS51375">
    <property type="entry name" value="PPR"/>
    <property type="match status" value="9"/>
</dbReference>
<dbReference type="PROSITE" id="PS50828">
    <property type="entry name" value="SMR"/>
    <property type="match status" value="1"/>
</dbReference>
<comment type="similarity">
    <text evidence="3">Belongs to the PPR family. P subfamily.</text>
</comment>
<comment type="online information" name="Pentatricopeptide repeat proteins">
    <link uri="https://ppr.plantenergy.uwa.edu.au"/>
</comment>
<evidence type="ECO:0000255" key="1">
    <source>
        <dbReference type="PROSITE-ProRule" id="PRU00321"/>
    </source>
</evidence>
<evidence type="ECO:0000256" key="2">
    <source>
        <dbReference type="SAM" id="MobiDB-lite"/>
    </source>
</evidence>
<evidence type="ECO:0000305" key="3"/>
<feature type="chain" id="PRO_0000342864" description="Pentatricopeptide repeat-containing protein At1g74750">
    <location>
        <begin position="1"/>
        <end position="855"/>
    </location>
</feature>
<feature type="repeat" description="PPR 1">
    <location>
        <begin position="358"/>
        <end position="392"/>
    </location>
</feature>
<feature type="repeat" description="PPR 2">
    <location>
        <begin position="393"/>
        <end position="427"/>
    </location>
</feature>
<feature type="repeat" description="PPR 3">
    <location>
        <begin position="428"/>
        <end position="462"/>
    </location>
</feature>
<feature type="repeat" description="PPR 4">
    <location>
        <begin position="463"/>
        <end position="497"/>
    </location>
</feature>
<feature type="repeat" description="PPR 5">
    <location>
        <begin position="498"/>
        <end position="532"/>
    </location>
</feature>
<feature type="repeat" description="PPR 6">
    <location>
        <begin position="533"/>
        <end position="567"/>
    </location>
</feature>
<feature type="repeat" description="PPR 7">
    <location>
        <begin position="568"/>
        <end position="602"/>
    </location>
</feature>
<feature type="repeat" description="PPR 8">
    <location>
        <begin position="603"/>
        <end position="637"/>
    </location>
</feature>
<feature type="domain" description="Smr" evidence="1">
    <location>
        <begin position="755"/>
        <end position="838"/>
    </location>
</feature>
<feature type="region of interest" description="Disordered" evidence="2">
    <location>
        <begin position="21"/>
        <end position="40"/>
    </location>
</feature>
<gene>
    <name type="ordered locus">At1g74750</name>
    <name type="ORF">F25A4.28</name>
</gene>
<proteinExistence type="evidence at transcript level"/>
<protein>
    <recommendedName>
        <fullName>Pentatricopeptide repeat-containing protein At1g74750</fullName>
    </recommendedName>
</protein>
<reference key="1">
    <citation type="journal article" date="2000" name="Nature">
        <title>Sequence and analysis of chromosome 1 of the plant Arabidopsis thaliana.</title>
        <authorList>
            <person name="Theologis A."/>
            <person name="Ecker J.R."/>
            <person name="Palm C.J."/>
            <person name="Federspiel N.A."/>
            <person name="Kaul S."/>
            <person name="White O."/>
            <person name="Alonso J."/>
            <person name="Altafi H."/>
            <person name="Araujo R."/>
            <person name="Bowman C.L."/>
            <person name="Brooks S.Y."/>
            <person name="Buehler E."/>
            <person name="Chan A."/>
            <person name="Chao Q."/>
            <person name="Chen H."/>
            <person name="Cheuk R.F."/>
            <person name="Chin C.W."/>
            <person name="Chung M.K."/>
            <person name="Conn L."/>
            <person name="Conway A.B."/>
            <person name="Conway A.R."/>
            <person name="Creasy T.H."/>
            <person name="Dewar K."/>
            <person name="Dunn P."/>
            <person name="Etgu P."/>
            <person name="Feldblyum T.V."/>
            <person name="Feng J.-D."/>
            <person name="Fong B."/>
            <person name="Fujii C.Y."/>
            <person name="Gill J.E."/>
            <person name="Goldsmith A.D."/>
            <person name="Haas B."/>
            <person name="Hansen N.F."/>
            <person name="Hughes B."/>
            <person name="Huizar L."/>
            <person name="Hunter J.L."/>
            <person name="Jenkins J."/>
            <person name="Johnson-Hopson C."/>
            <person name="Khan S."/>
            <person name="Khaykin E."/>
            <person name="Kim C.J."/>
            <person name="Koo H.L."/>
            <person name="Kremenetskaia I."/>
            <person name="Kurtz D.B."/>
            <person name="Kwan A."/>
            <person name="Lam B."/>
            <person name="Langin-Hooper S."/>
            <person name="Lee A."/>
            <person name="Lee J.M."/>
            <person name="Lenz C.A."/>
            <person name="Li J.H."/>
            <person name="Li Y.-P."/>
            <person name="Lin X."/>
            <person name="Liu S.X."/>
            <person name="Liu Z.A."/>
            <person name="Luros J.S."/>
            <person name="Maiti R."/>
            <person name="Marziali A."/>
            <person name="Militscher J."/>
            <person name="Miranda M."/>
            <person name="Nguyen M."/>
            <person name="Nierman W.C."/>
            <person name="Osborne B.I."/>
            <person name="Pai G."/>
            <person name="Peterson J."/>
            <person name="Pham P.K."/>
            <person name="Rizzo M."/>
            <person name="Rooney T."/>
            <person name="Rowley D."/>
            <person name="Sakano H."/>
            <person name="Salzberg S.L."/>
            <person name="Schwartz J.R."/>
            <person name="Shinn P."/>
            <person name="Southwick A.M."/>
            <person name="Sun H."/>
            <person name="Tallon L.J."/>
            <person name="Tambunga G."/>
            <person name="Toriumi M.J."/>
            <person name="Town C.D."/>
            <person name="Utterback T."/>
            <person name="Van Aken S."/>
            <person name="Vaysberg M."/>
            <person name="Vysotskaia V.S."/>
            <person name="Walker M."/>
            <person name="Wu D."/>
            <person name="Yu G."/>
            <person name="Fraser C.M."/>
            <person name="Venter J.C."/>
            <person name="Davis R.W."/>
        </authorList>
    </citation>
    <scope>NUCLEOTIDE SEQUENCE [LARGE SCALE GENOMIC DNA]</scope>
    <source>
        <strain>cv. Columbia</strain>
    </source>
</reference>
<reference key="2">
    <citation type="journal article" date="2017" name="Plant J.">
        <title>Araport11: a complete reannotation of the Arabidopsis thaliana reference genome.</title>
        <authorList>
            <person name="Cheng C.Y."/>
            <person name="Krishnakumar V."/>
            <person name="Chan A.P."/>
            <person name="Thibaud-Nissen F."/>
            <person name="Schobel S."/>
            <person name="Town C.D."/>
        </authorList>
    </citation>
    <scope>GENOME REANNOTATION</scope>
    <source>
        <strain>cv. Columbia</strain>
    </source>
</reference>
<reference key="3">
    <citation type="journal article" date="2004" name="Plant Cell">
        <title>Genome-wide analysis of Arabidopsis pentatricopeptide repeat proteins reveals their essential role in organelle biogenesis.</title>
        <authorList>
            <person name="Lurin C."/>
            <person name="Andres C."/>
            <person name="Aubourg S."/>
            <person name="Bellaoui M."/>
            <person name="Bitton F."/>
            <person name="Bruyere C."/>
            <person name="Caboche M."/>
            <person name="Debast C."/>
            <person name="Gualberto J."/>
            <person name="Hoffmann B."/>
            <person name="Lecharny A."/>
            <person name="Le Ret M."/>
            <person name="Martin-Magniette M.-L."/>
            <person name="Mireau H."/>
            <person name="Peeters N."/>
            <person name="Renou J.-P."/>
            <person name="Szurek B."/>
            <person name="Taconnat L."/>
            <person name="Small I."/>
        </authorList>
    </citation>
    <scope>GENE FAMILY</scope>
</reference>
<keyword id="KW-1185">Reference proteome</keyword>
<keyword id="KW-0677">Repeat</keyword>
<sequence length="855" mass="94709">MIRAKHISNLSSSARSFFLSGSRPSAADGNSCTCAEDESGVSKRQQIRTEVVQTGKRASNLAAGLAGSILPVEAGKPLVVPKTVEHFTRPSLLPQHVSSPALPGKADSVNHASAIIKEDVGVPIGDQIFKAGIGNVNLLSDIANYKIPLSDGTEVVGLPKSCMVDPTRPISGVKSSNVKVIRREHLAKVYPRSADRVPINSSPGTKQASNDVAGKSFEAHDLLSNNVSGKRKIMPQRPYTDSTRYASGGCDYSVHSSDDRTIISSVEGFGKPSREMMKVTPRTAPTPRQHCNPGYVVENVSSILRRFKWGHAAEEALHNFGFRMDAYQANQVLKQMDNYANALGFFYWLKRQPGFKHDGHTYTTMVGNLGRAKQFGEINKLLDEMVRDGCKPNTVTYNRLIHSYGRANYLKEAMNVFNQMQEAGCEPDRVTYCTLIDIHAKAGFLDIAMDMYQRMQEAGLSPDTFTYSVIINCLGKAGHLPAAHRLFCEMVGQGCTPNLVTFNIMIALHAKARNYETALKLYRDMQNAGFQPDKVTYSIVMEVLGHCGFLEEAEGVFAEMQRKNWVPDEPVYGLLVDLWGKAGNVDKAWQWYQAMLQAGLRPNVPTCNSLLSTFLRVHRMSEAYNLLQSMLALGLHPSLQTYTLLLSCCTDARSNFDMGFCGQLMAVSGHPAHMFLLKMPPAGPDGQKVRDHVSNFLDFMHSEDRESKRGLMDAVVDFLHKSGLKEEAGSVWEVAAGKNVYPDALREKSYSYWLINLHVMSEGTAVIALSRTLAWFRKQMLVSGDCPSRIDIVTGWGRRSRVTGTSMVRQAVEELLNIFNFPFFTENGNSGCFVGSGEPLKNWLLESYVERMHLL</sequence>
<organism>
    <name type="scientific">Arabidopsis thaliana</name>
    <name type="common">Mouse-ear cress</name>
    <dbReference type="NCBI Taxonomy" id="3702"/>
    <lineage>
        <taxon>Eukaryota</taxon>
        <taxon>Viridiplantae</taxon>
        <taxon>Streptophyta</taxon>
        <taxon>Embryophyta</taxon>
        <taxon>Tracheophyta</taxon>
        <taxon>Spermatophyta</taxon>
        <taxon>Magnoliopsida</taxon>
        <taxon>eudicotyledons</taxon>
        <taxon>Gunneridae</taxon>
        <taxon>Pentapetalae</taxon>
        <taxon>rosids</taxon>
        <taxon>malvids</taxon>
        <taxon>Brassicales</taxon>
        <taxon>Brassicaceae</taxon>
        <taxon>Camelineae</taxon>
        <taxon>Arabidopsis</taxon>
    </lineage>
</organism>
<name>PP123_ARATH</name>
<accession>Q9SSF9</accession>